<keyword id="KW-0020">Allergen</keyword>
<name>ALL5_LEPDS</name>
<protein>
    <recommendedName>
        <fullName>Mite allergen Lep d 5</fullName>
    </recommendedName>
    <allergenName>Lep d 5</allergenName>
</protein>
<accession>Q9U5P2</accession>
<evidence type="ECO:0000305" key="1"/>
<dbReference type="EMBL" id="AJ250278">
    <property type="protein sequence ID" value="CAB62212.1"/>
    <property type="molecule type" value="mRNA"/>
</dbReference>
<dbReference type="SMR" id="Q9U5P2"/>
<dbReference type="Allergome" id="3244">
    <property type="allergen name" value="Lep d 5.0101"/>
</dbReference>
<dbReference type="Allergome" id="444">
    <property type="allergen name" value="Lep d 5"/>
</dbReference>
<dbReference type="Gene3D" id="1.20.58.970">
    <property type="match status" value="1"/>
</dbReference>
<dbReference type="InterPro" id="IPR020306">
    <property type="entry name" value="Mite_allergen_group-5/21"/>
</dbReference>
<dbReference type="InterPro" id="IPR038455">
    <property type="entry name" value="Mite_allergen_group-5/21_sf"/>
</dbReference>
<dbReference type="Pfam" id="PF11642">
    <property type="entry name" value="Blo-t-5"/>
    <property type="match status" value="1"/>
</dbReference>
<sequence length="110" mass="12550">DDFRNEFDRLLIHMTEEQFAKLEQALAHLSHQVTELEKSKSKELKAQILREISIGLDFIDSAKGHFERELKRADLNLAEKFNFESALSTGAVLHKDLTALATKVKAIETK</sequence>
<organism>
    <name type="scientific">Lepidoglyphus destructor</name>
    <name type="common">Storage mite</name>
    <name type="synonym">Glycyphagus destructor</name>
    <dbReference type="NCBI Taxonomy" id="36936"/>
    <lineage>
        <taxon>Eukaryota</taxon>
        <taxon>Metazoa</taxon>
        <taxon>Ecdysozoa</taxon>
        <taxon>Arthropoda</taxon>
        <taxon>Chelicerata</taxon>
        <taxon>Arachnida</taxon>
        <taxon>Acari</taxon>
        <taxon>Acariformes</taxon>
        <taxon>Sarcoptiformes</taxon>
        <taxon>Astigmata</taxon>
        <taxon>Glycyphagoidea</taxon>
        <taxon>Glycyphagidae</taxon>
        <taxon>Lepidoglyphus</taxon>
    </lineage>
</organism>
<feature type="chain" id="PRO_0000151067" description="Mite allergen Lep d 5">
    <location>
        <begin position="1" status="less than"/>
        <end position="110"/>
    </location>
</feature>
<feature type="non-terminal residue">
    <location>
        <position position="1"/>
    </location>
</feature>
<reference key="1">
    <citation type="journal article" date="2001" name="Eur. J. Biochem.">
        <title>Cloning of three new allergens from the dust mite Lepidoglyphus destructor using phage surface display technology.</title>
        <authorList>
            <person name="Eriksson T.L.J."/>
            <person name="Rasool O."/>
            <person name="Huecas S."/>
            <person name="Whitley P."/>
            <person name="Crameri R."/>
            <person name="Appenzeller U."/>
            <person name="Gafvelin G."/>
            <person name="van Hage-Hamsten M."/>
        </authorList>
    </citation>
    <scope>NUCLEOTIDE SEQUENCE [MRNA]</scope>
</reference>
<proteinExistence type="evidence at protein level"/>
<comment type="allergen">
    <text>Causes an allergic reaction in human. Common symptoms of mite allergy are bronchial asthma, allergic rhinitis and conjunctivitis.</text>
</comment>
<comment type="similarity">
    <text evidence="1">Belongs to the mite group 5 allergen family.</text>
</comment>